<name>KDSB_SALHS</name>
<proteinExistence type="inferred from homology"/>
<reference key="1">
    <citation type="journal article" date="2011" name="J. Bacteriol.">
        <title>Comparative genomics of 28 Salmonella enterica isolates: evidence for CRISPR-mediated adaptive sublineage evolution.</title>
        <authorList>
            <person name="Fricke W.F."/>
            <person name="Mammel M.K."/>
            <person name="McDermott P.F."/>
            <person name="Tartera C."/>
            <person name="White D.G."/>
            <person name="Leclerc J.E."/>
            <person name="Ravel J."/>
            <person name="Cebula T.A."/>
        </authorList>
    </citation>
    <scope>NUCLEOTIDE SEQUENCE [LARGE SCALE GENOMIC DNA]</scope>
    <source>
        <strain>SL476</strain>
    </source>
</reference>
<evidence type="ECO:0000255" key="1">
    <source>
        <dbReference type="HAMAP-Rule" id="MF_00057"/>
    </source>
</evidence>
<feature type="chain" id="PRO_1000091903" description="3-deoxy-manno-octulosonate cytidylyltransferase">
    <location>
        <begin position="1"/>
        <end position="248"/>
    </location>
</feature>
<keyword id="KW-0963">Cytoplasm</keyword>
<keyword id="KW-0448">Lipopolysaccharide biosynthesis</keyword>
<keyword id="KW-0548">Nucleotidyltransferase</keyword>
<keyword id="KW-0808">Transferase</keyword>
<protein>
    <recommendedName>
        <fullName evidence="1">3-deoxy-manno-octulosonate cytidylyltransferase</fullName>
        <ecNumber evidence="1">2.7.7.38</ecNumber>
    </recommendedName>
    <alternativeName>
        <fullName evidence="1">CMP-2-keto-3-deoxyoctulosonic acid synthase</fullName>
        <shortName evidence="1">CKS</shortName>
        <shortName evidence="1">CMP-KDO synthase</shortName>
    </alternativeName>
</protein>
<sequence length="248" mass="27432">MSFVVIIPARFSSTRLPGKPLVDINGKPMIVHVLERARESGAERIIVATDHEDVARAVEAAGGEVCMTRADHQSGTERLAEVVEKCGFSDDTVIVNVQGDEPMIPAVIIRQVAENLAQRQVGMATLAVPIHSAEEAFNPNAVKVVLDAEGYALYFSRATIPWDRDRFAKSLETVGDTCLRHLGIYGYRAGFIRRYVSWQPSPLEHIEMLEQLRVLWYGEKIHVAVAKAVPGTGVDTADDLERVRAEMR</sequence>
<organism>
    <name type="scientific">Salmonella heidelberg (strain SL476)</name>
    <dbReference type="NCBI Taxonomy" id="454169"/>
    <lineage>
        <taxon>Bacteria</taxon>
        <taxon>Pseudomonadati</taxon>
        <taxon>Pseudomonadota</taxon>
        <taxon>Gammaproteobacteria</taxon>
        <taxon>Enterobacterales</taxon>
        <taxon>Enterobacteriaceae</taxon>
        <taxon>Salmonella</taxon>
    </lineage>
</organism>
<gene>
    <name evidence="1" type="primary">kdsB</name>
    <name type="ordered locus">SeHA_C1086</name>
</gene>
<dbReference type="EC" id="2.7.7.38" evidence="1"/>
<dbReference type="EMBL" id="CP001120">
    <property type="protein sequence ID" value="ACF68412.1"/>
    <property type="molecule type" value="Genomic_DNA"/>
</dbReference>
<dbReference type="RefSeq" id="WP_000011576.1">
    <property type="nucleotide sequence ID" value="NC_011083.1"/>
</dbReference>
<dbReference type="SMR" id="B4TDQ5"/>
<dbReference type="KEGG" id="seh:SeHA_C1086"/>
<dbReference type="HOGENOM" id="CLU_065038_1_0_6"/>
<dbReference type="UniPathway" id="UPA00030"/>
<dbReference type="UniPathway" id="UPA00358">
    <property type="reaction ID" value="UER00476"/>
</dbReference>
<dbReference type="Proteomes" id="UP000001866">
    <property type="component" value="Chromosome"/>
</dbReference>
<dbReference type="GO" id="GO:0005829">
    <property type="term" value="C:cytosol"/>
    <property type="evidence" value="ECO:0007669"/>
    <property type="project" value="TreeGrafter"/>
</dbReference>
<dbReference type="GO" id="GO:0008690">
    <property type="term" value="F:3-deoxy-manno-octulosonate cytidylyltransferase activity"/>
    <property type="evidence" value="ECO:0007669"/>
    <property type="project" value="UniProtKB-UniRule"/>
</dbReference>
<dbReference type="GO" id="GO:0033468">
    <property type="term" value="P:CMP-keto-3-deoxy-D-manno-octulosonic acid biosynthetic process"/>
    <property type="evidence" value="ECO:0007669"/>
    <property type="project" value="UniProtKB-UniRule"/>
</dbReference>
<dbReference type="GO" id="GO:0009103">
    <property type="term" value="P:lipopolysaccharide biosynthetic process"/>
    <property type="evidence" value="ECO:0007669"/>
    <property type="project" value="UniProtKB-UniRule"/>
</dbReference>
<dbReference type="CDD" id="cd02517">
    <property type="entry name" value="CMP-KDO-Synthetase"/>
    <property type="match status" value="1"/>
</dbReference>
<dbReference type="FunFam" id="3.90.550.10:FF:000011">
    <property type="entry name" value="3-deoxy-manno-octulosonate cytidylyltransferase"/>
    <property type="match status" value="1"/>
</dbReference>
<dbReference type="Gene3D" id="3.90.550.10">
    <property type="entry name" value="Spore Coat Polysaccharide Biosynthesis Protein SpsA, Chain A"/>
    <property type="match status" value="1"/>
</dbReference>
<dbReference type="HAMAP" id="MF_00057">
    <property type="entry name" value="KdsB"/>
    <property type="match status" value="1"/>
</dbReference>
<dbReference type="InterPro" id="IPR003329">
    <property type="entry name" value="Cytidylyl_trans"/>
</dbReference>
<dbReference type="InterPro" id="IPR004528">
    <property type="entry name" value="KdsB"/>
</dbReference>
<dbReference type="InterPro" id="IPR029044">
    <property type="entry name" value="Nucleotide-diphossugar_trans"/>
</dbReference>
<dbReference type="NCBIfam" id="TIGR00466">
    <property type="entry name" value="kdsB"/>
    <property type="match status" value="1"/>
</dbReference>
<dbReference type="NCBIfam" id="NF003950">
    <property type="entry name" value="PRK05450.1-3"/>
    <property type="match status" value="1"/>
</dbReference>
<dbReference type="NCBIfam" id="NF003952">
    <property type="entry name" value="PRK05450.1-5"/>
    <property type="match status" value="1"/>
</dbReference>
<dbReference type="NCBIfam" id="NF009905">
    <property type="entry name" value="PRK13368.1"/>
    <property type="match status" value="1"/>
</dbReference>
<dbReference type="PANTHER" id="PTHR42866">
    <property type="entry name" value="3-DEOXY-MANNO-OCTULOSONATE CYTIDYLYLTRANSFERASE"/>
    <property type="match status" value="1"/>
</dbReference>
<dbReference type="PANTHER" id="PTHR42866:SF2">
    <property type="entry name" value="3-DEOXY-MANNO-OCTULOSONATE CYTIDYLYLTRANSFERASE, MITOCHONDRIAL"/>
    <property type="match status" value="1"/>
</dbReference>
<dbReference type="Pfam" id="PF02348">
    <property type="entry name" value="CTP_transf_3"/>
    <property type="match status" value="1"/>
</dbReference>
<dbReference type="SUPFAM" id="SSF53448">
    <property type="entry name" value="Nucleotide-diphospho-sugar transferases"/>
    <property type="match status" value="1"/>
</dbReference>
<comment type="function">
    <text evidence="1">Activates KDO (a required 8-carbon sugar) for incorporation into bacterial lipopolysaccharide in Gram-negative bacteria.</text>
</comment>
<comment type="catalytic activity">
    <reaction evidence="1">
        <text>3-deoxy-alpha-D-manno-oct-2-ulosonate + CTP = CMP-3-deoxy-beta-D-manno-octulosonate + diphosphate</text>
        <dbReference type="Rhea" id="RHEA:23448"/>
        <dbReference type="ChEBI" id="CHEBI:33019"/>
        <dbReference type="ChEBI" id="CHEBI:37563"/>
        <dbReference type="ChEBI" id="CHEBI:85986"/>
        <dbReference type="ChEBI" id="CHEBI:85987"/>
        <dbReference type="EC" id="2.7.7.38"/>
    </reaction>
</comment>
<comment type="pathway">
    <text evidence="1">Nucleotide-sugar biosynthesis; CMP-3-deoxy-D-manno-octulosonate biosynthesis; CMP-3-deoxy-D-manno-octulosonate from 3-deoxy-D-manno-octulosonate and CTP: step 1/1.</text>
</comment>
<comment type="pathway">
    <text evidence="1">Bacterial outer membrane biogenesis; lipopolysaccharide biosynthesis.</text>
</comment>
<comment type="subcellular location">
    <subcellularLocation>
        <location evidence="1">Cytoplasm</location>
    </subcellularLocation>
</comment>
<comment type="similarity">
    <text evidence="1">Belongs to the KdsB family.</text>
</comment>
<accession>B4TDQ5</accession>